<sequence length="426" mass="45429">MNALNIVEYTHNLGVQAKVASAQMARASAAVKSRALLALARLLRENVEPLQTDNARDLDRAVANGLSAPMVDRLRLTPKVLETCAQGCEQLASMADVIGEIIGMKQMPSGIRVGQMRVPIGVFGMIYESRPNVTIEAASLSIKSGNACILRGGSEAIDSNKALAALVARALAEAGLPEHGVQLVQTTDREAVGQLIAMPDYVDVIIPRGGKGLIERISREAKVPVIKHLDGNCHTYVDDPCDIAMAVKVADNAKTNKYSPCNASESLLVARGVAAEFLPQIGAIYAAKGVEMRGCPESLAILKSVAGAQLAEATEQDWSEEYLAPIISVKIVAGVDEAIAHINRYSSHHTDAILTRDHMHAQRFLREVDSASVMVNASTRFADGFEYGLGAEIGISTDKFHARGPVGIEGLTSLKYVVLGEGEVRT</sequence>
<reference key="1">
    <citation type="submission" date="2007-11" db="EMBL/GenBank/DDBJ databases">
        <title>Complete sequence of Delftia acidovorans DSM 14801 / SPH-1.</title>
        <authorList>
            <person name="Copeland A."/>
            <person name="Lucas S."/>
            <person name="Lapidus A."/>
            <person name="Barry K."/>
            <person name="Glavina del Rio T."/>
            <person name="Dalin E."/>
            <person name="Tice H."/>
            <person name="Pitluck S."/>
            <person name="Lowry S."/>
            <person name="Clum A."/>
            <person name="Schmutz J."/>
            <person name="Larimer F."/>
            <person name="Land M."/>
            <person name="Hauser L."/>
            <person name="Kyrpides N."/>
            <person name="Kim E."/>
            <person name="Schleheck D."/>
            <person name="Richardson P."/>
        </authorList>
    </citation>
    <scope>NUCLEOTIDE SEQUENCE [LARGE SCALE GENOMIC DNA]</scope>
    <source>
        <strain>DSM 14801 / SPH-1</strain>
    </source>
</reference>
<protein>
    <recommendedName>
        <fullName evidence="1">Gamma-glutamyl phosphate reductase</fullName>
        <shortName evidence="1">GPR</shortName>
        <ecNumber evidence="1">1.2.1.41</ecNumber>
    </recommendedName>
    <alternativeName>
        <fullName evidence="1">Glutamate-5-semialdehyde dehydrogenase</fullName>
    </alternativeName>
    <alternativeName>
        <fullName evidence="1">Glutamyl-gamma-semialdehyde dehydrogenase</fullName>
        <shortName evidence="1">GSA dehydrogenase</shortName>
    </alternativeName>
</protein>
<name>PROA_DELAS</name>
<gene>
    <name evidence="1" type="primary">proA</name>
    <name type="ordered locus">Daci_6000</name>
</gene>
<feature type="chain" id="PRO_1000193593" description="Gamma-glutamyl phosphate reductase">
    <location>
        <begin position="1"/>
        <end position="426"/>
    </location>
</feature>
<evidence type="ECO:0000255" key="1">
    <source>
        <dbReference type="HAMAP-Rule" id="MF_00412"/>
    </source>
</evidence>
<dbReference type="EC" id="1.2.1.41" evidence="1"/>
<dbReference type="EMBL" id="CP000884">
    <property type="protein sequence ID" value="ABX38628.1"/>
    <property type="molecule type" value="Genomic_DNA"/>
</dbReference>
<dbReference type="RefSeq" id="WP_012207797.1">
    <property type="nucleotide sequence ID" value="NC_010002.1"/>
</dbReference>
<dbReference type="SMR" id="A9C1G5"/>
<dbReference type="STRING" id="398578.Daci_6000"/>
<dbReference type="GeneID" id="24113944"/>
<dbReference type="KEGG" id="dac:Daci_6000"/>
<dbReference type="eggNOG" id="COG0014">
    <property type="taxonomic scope" value="Bacteria"/>
</dbReference>
<dbReference type="HOGENOM" id="CLU_030231_0_0_4"/>
<dbReference type="UniPathway" id="UPA00098">
    <property type="reaction ID" value="UER00360"/>
</dbReference>
<dbReference type="Proteomes" id="UP000000784">
    <property type="component" value="Chromosome"/>
</dbReference>
<dbReference type="GO" id="GO:0005737">
    <property type="term" value="C:cytoplasm"/>
    <property type="evidence" value="ECO:0007669"/>
    <property type="project" value="UniProtKB-SubCell"/>
</dbReference>
<dbReference type="GO" id="GO:0004350">
    <property type="term" value="F:glutamate-5-semialdehyde dehydrogenase activity"/>
    <property type="evidence" value="ECO:0007669"/>
    <property type="project" value="UniProtKB-UniRule"/>
</dbReference>
<dbReference type="GO" id="GO:0050661">
    <property type="term" value="F:NADP binding"/>
    <property type="evidence" value="ECO:0007669"/>
    <property type="project" value="InterPro"/>
</dbReference>
<dbReference type="GO" id="GO:0055129">
    <property type="term" value="P:L-proline biosynthetic process"/>
    <property type="evidence" value="ECO:0007669"/>
    <property type="project" value="UniProtKB-UniRule"/>
</dbReference>
<dbReference type="CDD" id="cd07079">
    <property type="entry name" value="ALDH_F18-19_ProA-GPR"/>
    <property type="match status" value="1"/>
</dbReference>
<dbReference type="FunFam" id="3.40.309.10:FF:000006">
    <property type="entry name" value="Gamma-glutamyl phosphate reductase"/>
    <property type="match status" value="1"/>
</dbReference>
<dbReference type="Gene3D" id="3.40.605.10">
    <property type="entry name" value="Aldehyde Dehydrogenase, Chain A, domain 1"/>
    <property type="match status" value="1"/>
</dbReference>
<dbReference type="Gene3D" id="3.40.309.10">
    <property type="entry name" value="Aldehyde Dehydrogenase, Chain A, domain 2"/>
    <property type="match status" value="1"/>
</dbReference>
<dbReference type="HAMAP" id="MF_00412">
    <property type="entry name" value="ProA"/>
    <property type="match status" value="1"/>
</dbReference>
<dbReference type="InterPro" id="IPR016161">
    <property type="entry name" value="Ald_DH/histidinol_DH"/>
</dbReference>
<dbReference type="InterPro" id="IPR016163">
    <property type="entry name" value="Ald_DH_C"/>
</dbReference>
<dbReference type="InterPro" id="IPR016162">
    <property type="entry name" value="Ald_DH_N"/>
</dbReference>
<dbReference type="InterPro" id="IPR015590">
    <property type="entry name" value="Aldehyde_DH_dom"/>
</dbReference>
<dbReference type="InterPro" id="IPR020593">
    <property type="entry name" value="G-glutamylP_reductase_CS"/>
</dbReference>
<dbReference type="InterPro" id="IPR012134">
    <property type="entry name" value="Glu-5-SA_DH"/>
</dbReference>
<dbReference type="InterPro" id="IPR000965">
    <property type="entry name" value="GPR_dom"/>
</dbReference>
<dbReference type="NCBIfam" id="NF001221">
    <property type="entry name" value="PRK00197.1"/>
    <property type="match status" value="1"/>
</dbReference>
<dbReference type="NCBIfam" id="TIGR00407">
    <property type="entry name" value="proA"/>
    <property type="match status" value="1"/>
</dbReference>
<dbReference type="PANTHER" id="PTHR11063:SF8">
    <property type="entry name" value="DELTA-1-PYRROLINE-5-CARBOXYLATE SYNTHASE"/>
    <property type="match status" value="1"/>
</dbReference>
<dbReference type="PANTHER" id="PTHR11063">
    <property type="entry name" value="GLUTAMATE SEMIALDEHYDE DEHYDROGENASE"/>
    <property type="match status" value="1"/>
</dbReference>
<dbReference type="Pfam" id="PF00171">
    <property type="entry name" value="Aldedh"/>
    <property type="match status" value="2"/>
</dbReference>
<dbReference type="PIRSF" id="PIRSF000151">
    <property type="entry name" value="GPR"/>
    <property type="match status" value="1"/>
</dbReference>
<dbReference type="SUPFAM" id="SSF53720">
    <property type="entry name" value="ALDH-like"/>
    <property type="match status" value="1"/>
</dbReference>
<dbReference type="PROSITE" id="PS01223">
    <property type="entry name" value="PROA"/>
    <property type="match status" value="1"/>
</dbReference>
<accession>A9C1G5</accession>
<organism>
    <name type="scientific">Delftia acidovorans (strain DSM 14801 / SPH-1)</name>
    <dbReference type="NCBI Taxonomy" id="398578"/>
    <lineage>
        <taxon>Bacteria</taxon>
        <taxon>Pseudomonadati</taxon>
        <taxon>Pseudomonadota</taxon>
        <taxon>Betaproteobacteria</taxon>
        <taxon>Burkholderiales</taxon>
        <taxon>Comamonadaceae</taxon>
        <taxon>Delftia</taxon>
    </lineage>
</organism>
<comment type="function">
    <text evidence="1">Catalyzes the NADPH-dependent reduction of L-glutamate 5-phosphate into L-glutamate 5-semialdehyde and phosphate. The product spontaneously undergoes cyclization to form 1-pyrroline-5-carboxylate.</text>
</comment>
<comment type="catalytic activity">
    <reaction evidence="1">
        <text>L-glutamate 5-semialdehyde + phosphate + NADP(+) = L-glutamyl 5-phosphate + NADPH + H(+)</text>
        <dbReference type="Rhea" id="RHEA:19541"/>
        <dbReference type="ChEBI" id="CHEBI:15378"/>
        <dbReference type="ChEBI" id="CHEBI:43474"/>
        <dbReference type="ChEBI" id="CHEBI:57783"/>
        <dbReference type="ChEBI" id="CHEBI:58066"/>
        <dbReference type="ChEBI" id="CHEBI:58274"/>
        <dbReference type="ChEBI" id="CHEBI:58349"/>
        <dbReference type="EC" id="1.2.1.41"/>
    </reaction>
</comment>
<comment type="pathway">
    <text evidence="1">Amino-acid biosynthesis; L-proline biosynthesis; L-glutamate 5-semialdehyde from L-glutamate: step 2/2.</text>
</comment>
<comment type="subcellular location">
    <subcellularLocation>
        <location evidence="1">Cytoplasm</location>
    </subcellularLocation>
</comment>
<comment type="similarity">
    <text evidence="1">Belongs to the gamma-glutamyl phosphate reductase family.</text>
</comment>
<keyword id="KW-0028">Amino-acid biosynthesis</keyword>
<keyword id="KW-0963">Cytoplasm</keyword>
<keyword id="KW-0521">NADP</keyword>
<keyword id="KW-0560">Oxidoreductase</keyword>
<keyword id="KW-0641">Proline biosynthesis</keyword>
<keyword id="KW-1185">Reference proteome</keyword>
<proteinExistence type="inferred from homology"/>